<organism>
    <name type="scientific">Thiobacillus denitrificans (strain ATCC 25259 / T1)</name>
    <dbReference type="NCBI Taxonomy" id="292415"/>
    <lineage>
        <taxon>Bacteria</taxon>
        <taxon>Pseudomonadati</taxon>
        <taxon>Pseudomonadota</taxon>
        <taxon>Betaproteobacteria</taxon>
        <taxon>Nitrosomonadales</taxon>
        <taxon>Thiobacillaceae</taxon>
        <taxon>Thiobacillus</taxon>
    </lineage>
</organism>
<name>NAGZ_THIDA</name>
<comment type="function">
    <text evidence="1">Plays a role in peptidoglycan recycling by cleaving the terminal beta-1,4-linked N-acetylglucosamine (GlcNAc) from peptide-linked peptidoglycan fragments, giving rise to free GlcNAc, anhydro-N-acetylmuramic acid and anhydro-N-acetylmuramic acid-linked peptides.</text>
</comment>
<comment type="catalytic activity">
    <reaction evidence="1">
        <text>Hydrolysis of terminal non-reducing N-acetyl-D-hexosamine residues in N-acetyl-beta-D-hexosaminides.</text>
        <dbReference type="EC" id="3.2.1.52"/>
    </reaction>
</comment>
<comment type="pathway">
    <text evidence="1">Cell wall biogenesis; peptidoglycan recycling.</text>
</comment>
<comment type="subcellular location">
    <subcellularLocation>
        <location evidence="1">Cytoplasm</location>
    </subcellularLocation>
</comment>
<comment type="similarity">
    <text evidence="1">Belongs to the glycosyl hydrolase 3 family. NagZ subfamily.</text>
</comment>
<sequence>MTLGPLMLDVAGTELCDDDRRRLSDPLVGGVILFSRNYRDPAQLAALCEEIHALKAAPLLIGVDHEGGRVQRFRDGFTRLPPMRSLGAIWNEHPQRARELARETGYVLASELRAHGVDFSFAPVLDLDYGASSVIGDRAFHADPQAVFQLGQAVMLGMKDAGMAACGKHFPGHGFVIADSHVDIPVDRRTLGDIARADLVPFRLMVEAGLAAMMPAHVIYPEVDAQPAGFSRVWLQKILRQQLGFDGAVFSDDLCMAGAAFAGGIVERVRAALDAGCDMALVCNHPELADEVLAKLDVDWPAPARARLARMHGHPAHAPTMTALRESARYAEALHHVAGLGRDSAELDLSDPTDYCGRA</sequence>
<feature type="chain" id="PRO_0000234926" description="Beta-hexosaminidase">
    <location>
        <begin position="1"/>
        <end position="359"/>
    </location>
</feature>
<feature type="active site" description="Proton donor/acceptor" evidence="1">
    <location>
        <position position="181"/>
    </location>
</feature>
<feature type="active site" description="Nucleophile" evidence="1">
    <location>
        <position position="252"/>
    </location>
</feature>
<feature type="binding site" evidence="1">
    <location>
        <position position="64"/>
    </location>
    <ligand>
        <name>substrate</name>
    </ligand>
</feature>
<feature type="binding site" evidence="1">
    <location>
        <position position="72"/>
    </location>
    <ligand>
        <name>substrate</name>
    </ligand>
</feature>
<feature type="binding site" evidence="1">
    <location>
        <position position="138"/>
    </location>
    <ligand>
        <name>substrate</name>
    </ligand>
</feature>
<feature type="binding site" evidence="1">
    <location>
        <begin position="168"/>
        <end position="169"/>
    </location>
    <ligand>
        <name>substrate</name>
    </ligand>
</feature>
<feature type="site" description="Important for catalytic activity" evidence="1">
    <location>
        <position position="179"/>
    </location>
</feature>
<dbReference type="EC" id="3.2.1.52" evidence="1"/>
<dbReference type="EMBL" id="CP000116">
    <property type="protein sequence ID" value="AAZ96680.1"/>
    <property type="molecule type" value="Genomic_DNA"/>
</dbReference>
<dbReference type="RefSeq" id="WP_011311239.1">
    <property type="nucleotide sequence ID" value="NC_007404.1"/>
</dbReference>
<dbReference type="SMR" id="Q3SKU2"/>
<dbReference type="STRING" id="292415.Tbd_0727"/>
<dbReference type="CAZy" id="GH3">
    <property type="family name" value="Glycoside Hydrolase Family 3"/>
</dbReference>
<dbReference type="KEGG" id="tbd:Tbd_0727"/>
<dbReference type="eggNOG" id="COG1472">
    <property type="taxonomic scope" value="Bacteria"/>
</dbReference>
<dbReference type="HOGENOM" id="CLU_008392_0_0_4"/>
<dbReference type="OrthoDB" id="9786661at2"/>
<dbReference type="UniPathway" id="UPA00544"/>
<dbReference type="Proteomes" id="UP000008291">
    <property type="component" value="Chromosome"/>
</dbReference>
<dbReference type="GO" id="GO:0005737">
    <property type="term" value="C:cytoplasm"/>
    <property type="evidence" value="ECO:0007669"/>
    <property type="project" value="UniProtKB-SubCell"/>
</dbReference>
<dbReference type="GO" id="GO:0004563">
    <property type="term" value="F:beta-N-acetylhexosaminidase activity"/>
    <property type="evidence" value="ECO:0007669"/>
    <property type="project" value="UniProtKB-UniRule"/>
</dbReference>
<dbReference type="GO" id="GO:0005975">
    <property type="term" value="P:carbohydrate metabolic process"/>
    <property type="evidence" value="ECO:0007669"/>
    <property type="project" value="InterPro"/>
</dbReference>
<dbReference type="GO" id="GO:0051301">
    <property type="term" value="P:cell division"/>
    <property type="evidence" value="ECO:0007669"/>
    <property type="project" value="UniProtKB-KW"/>
</dbReference>
<dbReference type="GO" id="GO:0071555">
    <property type="term" value="P:cell wall organization"/>
    <property type="evidence" value="ECO:0007669"/>
    <property type="project" value="UniProtKB-KW"/>
</dbReference>
<dbReference type="GO" id="GO:0009252">
    <property type="term" value="P:peptidoglycan biosynthetic process"/>
    <property type="evidence" value="ECO:0007669"/>
    <property type="project" value="UniProtKB-KW"/>
</dbReference>
<dbReference type="GO" id="GO:0009254">
    <property type="term" value="P:peptidoglycan turnover"/>
    <property type="evidence" value="ECO:0007669"/>
    <property type="project" value="UniProtKB-UniRule"/>
</dbReference>
<dbReference type="GO" id="GO:0008360">
    <property type="term" value="P:regulation of cell shape"/>
    <property type="evidence" value="ECO:0007669"/>
    <property type="project" value="UniProtKB-KW"/>
</dbReference>
<dbReference type="FunFam" id="3.20.20.300:FF:000001">
    <property type="entry name" value="Beta-hexosaminidase"/>
    <property type="match status" value="1"/>
</dbReference>
<dbReference type="Gene3D" id="3.20.20.300">
    <property type="entry name" value="Glycoside hydrolase, family 3, N-terminal domain"/>
    <property type="match status" value="1"/>
</dbReference>
<dbReference type="HAMAP" id="MF_00364">
    <property type="entry name" value="NagZ"/>
    <property type="match status" value="1"/>
</dbReference>
<dbReference type="InterPro" id="IPR022956">
    <property type="entry name" value="Beta_hexosaminidase_bac"/>
</dbReference>
<dbReference type="InterPro" id="IPR001764">
    <property type="entry name" value="Glyco_hydro_3_N"/>
</dbReference>
<dbReference type="InterPro" id="IPR036962">
    <property type="entry name" value="Glyco_hydro_3_N_sf"/>
</dbReference>
<dbReference type="InterPro" id="IPR017853">
    <property type="entry name" value="Glycoside_hydrolase_SF"/>
</dbReference>
<dbReference type="InterPro" id="IPR050226">
    <property type="entry name" value="NagZ_Beta-hexosaminidase"/>
</dbReference>
<dbReference type="NCBIfam" id="NF003740">
    <property type="entry name" value="PRK05337.1"/>
    <property type="match status" value="1"/>
</dbReference>
<dbReference type="PANTHER" id="PTHR30480:SF13">
    <property type="entry name" value="BETA-HEXOSAMINIDASE"/>
    <property type="match status" value="1"/>
</dbReference>
<dbReference type="PANTHER" id="PTHR30480">
    <property type="entry name" value="BETA-HEXOSAMINIDASE-RELATED"/>
    <property type="match status" value="1"/>
</dbReference>
<dbReference type="Pfam" id="PF00933">
    <property type="entry name" value="Glyco_hydro_3"/>
    <property type="match status" value="1"/>
</dbReference>
<dbReference type="SUPFAM" id="SSF51445">
    <property type="entry name" value="(Trans)glycosidases"/>
    <property type="match status" value="1"/>
</dbReference>
<proteinExistence type="inferred from homology"/>
<reference key="1">
    <citation type="journal article" date="2006" name="J. Bacteriol.">
        <title>The genome sequence of the obligately chemolithoautotrophic, facultatively anaerobic bacterium Thiobacillus denitrificans.</title>
        <authorList>
            <person name="Beller H.R."/>
            <person name="Chain P.S."/>
            <person name="Letain T.E."/>
            <person name="Chakicherla A."/>
            <person name="Larimer F.W."/>
            <person name="Richardson P.M."/>
            <person name="Coleman M.A."/>
            <person name="Wood A.P."/>
            <person name="Kelly D.P."/>
        </authorList>
    </citation>
    <scope>NUCLEOTIDE SEQUENCE [LARGE SCALE GENOMIC DNA]</scope>
    <source>
        <strain>ATCC 25259 / T1</strain>
    </source>
</reference>
<keyword id="KW-0131">Cell cycle</keyword>
<keyword id="KW-0132">Cell division</keyword>
<keyword id="KW-0133">Cell shape</keyword>
<keyword id="KW-0961">Cell wall biogenesis/degradation</keyword>
<keyword id="KW-0963">Cytoplasm</keyword>
<keyword id="KW-0326">Glycosidase</keyword>
<keyword id="KW-0378">Hydrolase</keyword>
<keyword id="KW-0573">Peptidoglycan synthesis</keyword>
<keyword id="KW-1185">Reference proteome</keyword>
<gene>
    <name evidence="1" type="primary">nagZ</name>
    <name type="ordered locus">Tbd_0727</name>
</gene>
<accession>Q3SKU2</accession>
<evidence type="ECO:0000255" key="1">
    <source>
        <dbReference type="HAMAP-Rule" id="MF_00364"/>
    </source>
</evidence>
<protein>
    <recommendedName>
        <fullName evidence="1">Beta-hexosaminidase</fullName>
        <ecNumber evidence="1">3.2.1.52</ecNumber>
    </recommendedName>
    <alternativeName>
        <fullName evidence="1">Beta-N-acetylhexosaminidase</fullName>
    </alternativeName>
    <alternativeName>
        <fullName evidence="1">N-acetyl-beta-glucosaminidase</fullName>
    </alternativeName>
</protein>